<gene>
    <name type="ORF">AFLA_084750</name>
</gene>
<reference key="1">
    <citation type="journal article" date="2015" name="Genome Announc.">
        <title>Genome sequence of Aspergillus flavus NRRL 3357, a strain that causes aflatoxin contamination of food and feed.</title>
        <authorList>
            <person name="Nierman W.C."/>
            <person name="Yu J."/>
            <person name="Fedorova-Abrams N.D."/>
            <person name="Losada L."/>
            <person name="Cleveland T.E."/>
            <person name="Bhatnagar D."/>
            <person name="Bennett J.W."/>
            <person name="Dean R."/>
            <person name="Payne G.A."/>
        </authorList>
    </citation>
    <scope>NUCLEOTIDE SEQUENCE [LARGE SCALE GENOMIC DNA]</scope>
    <source>
        <strain>ATCC 200026 / FGSC A1120 / IAM 13836 / NRRL 3357 / JCM 12722 / SRRC 167</strain>
    </source>
</reference>
<protein>
    <recommendedName>
        <fullName>Probable Xaa-Pro aminopeptidase AFLA_084750</fullName>
        <ecNumber>3.4.11.9</ecNumber>
    </recommendedName>
    <alternativeName>
        <fullName>Aminoacylproline aminopeptidase</fullName>
    </alternativeName>
    <alternativeName>
        <fullName>Prolidase</fullName>
    </alternativeName>
</protein>
<proteinExistence type="inferred from homology"/>
<name>AMPP2_ASPFN</name>
<comment type="function">
    <text evidence="1">Catalyzes the removal of a penultimate prolyl residue from the N-termini of peptides.</text>
</comment>
<comment type="catalytic activity">
    <reaction>
        <text>Release of any N-terminal amino acid, including proline, that is linked to proline, even from a dipeptide or tripeptide.</text>
        <dbReference type="EC" id="3.4.11.9"/>
    </reaction>
</comment>
<comment type="cofactor">
    <cofactor evidence="1">
        <name>Mn(2+)</name>
        <dbReference type="ChEBI" id="CHEBI:29035"/>
    </cofactor>
    <text evidence="1">Binds 2 manganese ions per subunit.</text>
</comment>
<comment type="similarity">
    <text evidence="2">Belongs to the peptidase M24B family.</text>
</comment>
<evidence type="ECO:0000250" key="1"/>
<evidence type="ECO:0000305" key="2"/>
<accession>B8MZI5</accession>
<feature type="chain" id="PRO_0000411825" description="Probable Xaa-Pro aminopeptidase AFLA_084750">
    <location>
        <begin position="1"/>
        <end position="491"/>
    </location>
</feature>
<feature type="binding site" evidence="1">
    <location>
        <position position="271"/>
    </location>
    <ligand>
        <name>Mn(2+)</name>
        <dbReference type="ChEBI" id="CHEBI:29035"/>
        <label>2</label>
    </ligand>
</feature>
<feature type="binding site" evidence="1">
    <location>
        <position position="282"/>
    </location>
    <ligand>
        <name>Mn(2+)</name>
        <dbReference type="ChEBI" id="CHEBI:29035"/>
        <label>1</label>
    </ligand>
</feature>
<feature type="binding site" evidence="1">
    <location>
        <position position="282"/>
    </location>
    <ligand>
        <name>Mn(2+)</name>
        <dbReference type="ChEBI" id="CHEBI:29035"/>
        <label>2</label>
    </ligand>
</feature>
<feature type="binding site" evidence="1">
    <location>
        <position position="419"/>
    </location>
    <ligand>
        <name>Mn(2+)</name>
        <dbReference type="ChEBI" id="CHEBI:29035"/>
        <label>1</label>
    </ligand>
</feature>
<feature type="binding site" evidence="1">
    <location>
        <position position="458"/>
    </location>
    <ligand>
        <name>Mn(2+)</name>
        <dbReference type="ChEBI" id="CHEBI:29035"/>
        <label>1</label>
    </ligand>
</feature>
<feature type="binding site" evidence="1">
    <location>
        <position position="458"/>
    </location>
    <ligand>
        <name>Mn(2+)</name>
        <dbReference type="ChEBI" id="CHEBI:29035"/>
        <label>2</label>
    </ligand>
</feature>
<organism>
    <name type="scientific">Aspergillus flavus (strain ATCC 200026 / FGSC A1120 / IAM 13836 / NRRL 3357 / JCM 12722 / SRRC 167)</name>
    <dbReference type="NCBI Taxonomy" id="332952"/>
    <lineage>
        <taxon>Eukaryota</taxon>
        <taxon>Fungi</taxon>
        <taxon>Dikarya</taxon>
        <taxon>Ascomycota</taxon>
        <taxon>Pezizomycotina</taxon>
        <taxon>Eurotiomycetes</taxon>
        <taxon>Eurotiomycetidae</taxon>
        <taxon>Eurotiales</taxon>
        <taxon>Aspergillaceae</taxon>
        <taxon>Aspergillus</taxon>
        <taxon>Aspergillus subgen. Circumdati</taxon>
    </lineage>
</organism>
<dbReference type="EC" id="3.4.11.9"/>
<dbReference type="EMBL" id="EQ963472">
    <property type="protein sequence ID" value="EED57777.1"/>
    <property type="molecule type" value="Genomic_DNA"/>
</dbReference>
<dbReference type="RefSeq" id="XP_002373389.1">
    <property type="nucleotide sequence ID" value="XM_002373348.1"/>
</dbReference>
<dbReference type="SMR" id="B8MZI5"/>
<dbReference type="STRING" id="332952.B8MZI5"/>
<dbReference type="EnsemblFungi" id="EED57777">
    <property type="protein sequence ID" value="EED57777"/>
    <property type="gene ID" value="AFLA_084750"/>
</dbReference>
<dbReference type="VEuPathDB" id="FungiDB:AFLA_004058"/>
<dbReference type="eggNOG" id="KOG2737">
    <property type="taxonomic scope" value="Eukaryota"/>
</dbReference>
<dbReference type="HOGENOM" id="CLU_017266_1_2_1"/>
<dbReference type="OMA" id="YELRMIR"/>
<dbReference type="GO" id="GO:0030145">
    <property type="term" value="F:manganese ion binding"/>
    <property type="evidence" value="ECO:0007669"/>
    <property type="project" value="InterPro"/>
</dbReference>
<dbReference type="GO" id="GO:0070006">
    <property type="term" value="F:metalloaminopeptidase activity"/>
    <property type="evidence" value="ECO:0007669"/>
    <property type="project" value="InterPro"/>
</dbReference>
<dbReference type="GO" id="GO:0006508">
    <property type="term" value="P:proteolysis"/>
    <property type="evidence" value="ECO:0007669"/>
    <property type="project" value="UniProtKB-KW"/>
</dbReference>
<dbReference type="CDD" id="cd01087">
    <property type="entry name" value="Prolidase"/>
    <property type="match status" value="1"/>
</dbReference>
<dbReference type="Gene3D" id="3.90.230.10">
    <property type="entry name" value="Creatinase/methionine aminopeptidase superfamily"/>
    <property type="match status" value="1"/>
</dbReference>
<dbReference type="Gene3D" id="3.40.350.10">
    <property type="entry name" value="Creatinase/prolidase N-terminal domain"/>
    <property type="match status" value="1"/>
</dbReference>
<dbReference type="InterPro" id="IPR007865">
    <property type="entry name" value="Aminopep_P_N"/>
</dbReference>
<dbReference type="InterPro" id="IPR029149">
    <property type="entry name" value="Creatin/AminoP/Spt16_N"/>
</dbReference>
<dbReference type="InterPro" id="IPR036005">
    <property type="entry name" value="Creatinase/aminopeptidase-like"/>
</dbReference>
<dbReference type="InterPro" id="IPR000994">
    <property type="entry name" value="Pept_M24"/>
</dbReference>
<dbReference type="InterPro" id="IPR001131">
    <property type="entry name" value="Peptidase_M24B_aminopep-P_CS"/>
</dbReference>
<dbReference type="InterPro" id="IPR052433">
    <property type="entry name" value="X-Pro_dipept-like"/>
</dbReference>
<dbReference type="PANTHER" id="PTHR43226">
    <property type="entry name" value="XAA-PRO AMINOPEPTIDASE 3"/>
    <property type="match status" value="1"/>
</dbReference>
<dbReference type="PANTHER" id="PTHR43226:SF3">
    <property type="entry name" value="XAA-PRO AMINOPEPTIDASE AN0832-RELATED"/>
    <property type="match status" value="1"/>
</dbReference>
<dbReference type="Pfam" id="PF05195">
    <property type="entry name" value="AMP_N"/>
    <property type="match status" value="1"/>
</dbReference>
<dbReference type="Pfam" id="PF00557">
    <property type="entry name" value="Peptidase_M24"/>
    <property type="match status" value="1"/>
</dbReference>
<dbReference type="SMART" id="SM01011">
    <property type="entry name" value="AMP_N"/>
    <property type="match status" value="1"/>
</dbReference>
<dbReference type="SUPFAM" id="SSF55920">
    <property type="entry name" value="Creatinase/aminopeptidase"/>
    <property type="match status" value="1"/>
</dbReference>
<dbReference type="SUPFAM" id="SSF53092">
    <property type="entry name" value="Creatinase/prolidase N-terminal domain"/>
    <property type="match status" value="1"/>
</dbReference>
<dbReference type="PROSITE" id="PS00491">
    <property type="entry name" value="PROLINE_PEPTIDASE"/>
    <property type="match status" value="1"/>
</dbReference>
<sequence length="491" mass="55816">MRVSEPSDVVIRSDDTCHIHLTWSGSERRSAAKQHARKVAMKLGVSSGLIYLVGQPTVNWGDSDQPQPFRQRRYFYYLSGIDEPDCYLTYDIQADLLTLYVPDFDLRRAVWMGPTLTIEEAHKQSDVDRVNFFAALQHDLEWWTTKNKGTRPIYVLHDSQQPLIPSKRLWLDNERLLPAMNAARVIKDEYELRMIRQANYISGLAHRKILEDIHRMSTEAEIESSFLATCVSHGAKNQSYAIIAGSGENAAVLHYVKNNEPLDGRQLVCLDAGAEWRCYASDVTRTIPLWTDWPSERARNIYRVVEEMQEECIRRIRKGVRFRDLQLLAHDIAIKGLQKLDILTNDCTSAIYESGASAVFFPHGLGHHVGLEVHDVSKRPITALDGNQANWGNHNFVPLLTDSSWSVPLLDEGMVVTIEPGIYFNRLALLNAQNQPLAKYINFDEAEKYIPIGGVRIEDDILVTAKGYENLTTAPKGEEMLEIIRRGIDNS</sequence>
<keyword id="KW-0031">Aminopeptidase</keyword>
<keyword id="KW-0378">Hydrolase</keyword>
<keyword id="KW-0464">Manganese</keyword>
<keyword id="KW-0479">Metal-binding</keyword>
<keyword id="KW-0482">Metalloprotease</keyword>
<keyword id="KW-0645">Protease</keyword>